<organism>
    <name type="scientific">African swine fever virus (isolate Tick/South Africa/Pretoriuskop Pr4/1996)</name>
    <name type="common">ASFV</name>
    <dbReference type="NCBI Taxonomy" id="561443"/>
    <lineage>
        <taxon>Viruses</taxon>
        <taxon>Varidnaviria</taxon>
        <taxon>Bamfordvirae</taxon>
        <taxon>Nucleocytoviricota</taxon>
        <taxon>Pokkesviricetes</taxon>
        <taxon>Asfuvirales</taxon>
        <taxon>Asfarviridae</taxon>
        <taxon>Asfivirus</taxon>
        <taxon>African swine fever virus</taxon>
    </lineage>
</organism>
<keyword id="KW-0244">Early protein</keyword>
<keyword id="KW-1043">Host membrane</keyword>
<keyword id="KW-0472">Membrane</keyword>
<keyword id="KW-0812">Transmembrane</keyword>
<keyword id="KW-1133">Transmembrane helix</keyword>
<proteinExistence type="inferred from homology"/>
<protein>
    <recommendedName>
        <fullName>Protein MGF 300-1L</fullName>
    </recommendedName>
</protein>
<feature type="chain" id="PRO_0000373230" description="Protein MGF 300-1L">
    <location>
        <begin position="1"/>
        <end position="268"/>
    </location>
</feature>
<feature type="topological domain" description="Cytoplasmic" evidence="2">
    <location>
        <begin position="1"/>
        <end position="175"/>
    </location>
</feature>
<feature type="transmembrane region" description="Helical" evidence="2">
    <location>
        <begin position="176"/>
        <end position="193"/>
    </location>
</feature>
<feature type="topological domain" description="Extracellular" evidence="2">
    <location>
        <begin position="194"/>
        <end position="268"/>
    </location>
</feature>
<comment type="function">
    <text evidence="1">Plays a role in virus cell tropism, and may be required for efficient virus replication in macrophages.</text>
</comment>
<comment type="subcellular location">
    <subcellularLocation>
        <location evidence="3">Host membrane</location>
        <topology evidence="3">Single-pass membrane protein</topology>
    </subcellularLocation>
</comment>
<comment type="induction">
    <text evidence="3">Expressed in the early phase of the viral replicative cycle.</text>
</comment>
<comment type="similarity">
    <text evidence="3">Belongs to the asfivirus MGF 300 family.</text>
</comment>
<accession>P0C9K7</accession>
<evidence type="ECO:0000250" key="1"/>
<evidence type="ECO:0000255" key="2"/>
<evidence type="ECO:0000305" key="3"/>
<name>3001L_ASFP4</name>
<reference key="1">
    <citation type="submission" date="2003-03" db="EMBL/GenBank/DDBJ databases">
        <title>African swine fever virus genomes.</title>
        <authorList>
            <person name="Kutish G.F."/>
            <person name="Rock D.L."/>
        </authorList>
    </citation>
    <scope>NUCLEOTIDE SEQUENCE [LARGE SCALE GENOMIC DNA]</scope>
</reference>
<gene>
    <name type="ordered locus">Pret-027</name>
</gene>
<sequence>MVSLTTCCLKNIVNQHAHVENTVLLYHLGLRWNCKTLYQCTQCNGVNYTNSHSDQCKNKDLFLMKVIVKKNLAVARTLLSWGASPEYARLFCRNTEEEQALNVQQVADVSSSKILERLTMSYKENDEQLLITFYLLNLSTNFSTNLREQVRFNIVSYIICDLAIHQTFKIFYAKNYSLSTLYCIFLAIYYKRYTALRKMVKIYPGLKPFAYLTGFMFDDERVMETYNSTDDEISECKNRIIAIKGCYGNFHCRSDIDHMYAFSQNNFW</sequence>
<organismHost>
    <name type="scientific">Ornithodoros</name>
    <name type="common">relapsing fever ticks</name>
    <dbReference type="NCBI Taxonomy" id="6937"/>
</organismHost>
<organismHost>
    <name type="scientific">Phacochoerus aethiopicus</name>
    <name type="common">Warthog</name>
    <dbReference type="NCBI Taxonomy" id="85517"/>
</organismHost>
<organismHost>
    <name type="scientific">Phacochoerus africanus</name>
    <name type="common">Warthog</name>
    <dbReference type="NCBI Taxonomy" id="41426"/>
</organismHost>
<organismHost>
    <name type="scientific">Potamochoerus larvatus</name>
    <name type="common">Bushpig</name>
    <dbReference type="NCBI Taxonomy" id="273792"/>
</organismHost>
<organismHost>
    <name type="scientific">Sus scrofa</name>
    <name type="common">Pig</name>
    <dbReference type="NCBI Taxonomy" id="9823"/>
</organismHost>
<dbReference type="EMBL" id="AY261363">
    <property type="status" value="NOT_ANNOTATED_CDS"/>
    <property type="molecule type" value="Genomic_DNA"/>
</dbReference>
<dbReference type="Proteomes" id="UP000000859">
    <property type="component" value="Segment"/>
</dbReference>
<dbReference type="GO" id="GO:0033644">
    <property type="term" value="C:host cell membrane"/>
    <property type="evidence" value="ECO:0007669"/>
    <property type="project" value="UniProtKB-SubCell"/>
</dbReference>
<dbReference type="GO" id="GO:0016020">
    <property type="term" value="C:membrane"/>
    <property type="evidence" value="ECO:0007669"/>
    <property type="project" value="UniProtKB-KW"/>
</dbReference>